<sequence length="505" mass="54648">MAAPSAIPRRGLFIGGGWREPSLGRRLPVVNPATEATIGDIPAATAEDVELAVSAARDAFGRDGGRHWSRAPGAVRAKYLKAIAAKIKDKKSYLALLETLDSGKPLDEAAGDMEDVAACFEYYADLAEALDGKQRAPISLPMENFESYVLKEPIGVVGLITPWNYPLLMATWKVAPALAAGCTAVLKPSELASLTCLELGGICAEIGLPPGVLNIITGLGTEAGAPLASHPHVDKIAFTGSTETGKRIMITASQMVKPVSLELGGKSPLIVFDDVDIDKAVEWAMFGCFANAGQVCSATSRLLLHEKIAKRFLDRLVAWAKSIKISDPLEEGCRLGSVVSEGQYQKIMKFISTARCEGATILYGGARPQHLKRGFFIEPTIITNVSTSMQIWREEVFGPVICVKEFRTEREAVELANDTHYGLAGAVISNDLERCERISKAIQSGIVWINCSQPCFVQAPWGGNKRSGFGRELGQWGLDNYLSVKQVTKYCSDEPYGWYRPPSKL</sequence>
<name>BADH1_ORYSJ</name>
<reference key="1">
    <citation type="journal article" date="1997" name="Plant J.">
        <title>Expression of a betaine aldehyde dehydrogenase gene in rice, a glycinebetaine nonaccumulator, and possible localization of its protein in peroxisomes.</title>
        <authorList>
            <person name="Nakamura T."/>
            <person name="Yokota S."/>
            <person name="Muramoto Y."/>
            <person name="Tsutsui K."/>
            <person name="Oguri Y."/>
            <person name="Fukui K."/>
            <person name="Takabe T."/>
        </authorList>
    </citation>
    <scope>NUCLEOTIDE SEQUENCE [GENOMIC DNA]</scope>
    <source>
        <strain>cv. Nipponbare</strain>
    </source>
</reference>
<reference key="2">
    <citation type="journal article" date="2002" name="Nature">
        <title>Sequence and analysis of rice chromosome 4.</title>
        <authorList>
            <person name="Feng Q."/>
            <person name="Zhang Y."/>
            <person name="Hao P."/>
            <person name="Wang S."/>
            <person name="Fu G."/>
            <person name="Huang Y."/>
            <person name="Li Y."/>
            <person name="Zhu J."/>
            <person name="Liu Y."/>
            <person name="Hu X."/>
            <person name="Jia P."/>
            <person name="Zhang Y."/>
            <person name="Zhao Q."/>
            <person name="Ying K."/>
            <person name="Yu S."/>
            <person name="Tang Y."/>
            <person name="Weng Q."/>
            <person name="Zhang L."/>
            <person name="Lu Y."/>
            <person name="Mu J."/>
            <person name="Lu Y."/>
            <person name="Zhang L.S."/>
            <person name="Yu Z."/>
            <person name="Fan D."/>
            <person name="Liu X."/>
            <person name="Lu T."/>
            <person name="Li C."/>
            <person name="Wu Y."/>
            <person name="Sun T."/>
            <person name="Lei H."/>
            <person name="Li T."/>
            <person name="Hu H."/>
            <person name="Guan J."/>
            <person name="Wu M."/>
            <person name="Zhang R."/>
            <person name="Zhou B."/>
            <person name="Chen Z."/>
            <person name="Chen L."/>
            <person name="Jin Z."/>
            <person name="Wang R."/>
            <person name="Yin H."/>
            <person name="Cai Z."/>
            <person name="Ren S."/>
            <person name="Lv G."/>
            <person name="Gu W."/>
            <person name="Zhu G."/>
            <person name="Tu Y."/>
            <person name="Jia J."/>
            <person name="Zhang Y."/>
            <person name="Chen J."/>
            <person name="Kang H."/>
            <person name="Chen X."/>
            <person name="Shao C."/>
            <person name="Sun Y."/>
            <person name="Hu Q."/>
            <person name="Zhang X."/>
            <person name="Zhang W."/>
            <person name="Wang L."/>
            <person name="Ding C."/>
            <person name="Sheng H."/>
            <person name="Gu J."/>
            <person name="Chen S."/>
            <person name="Ni L."/>
            <person name="Zhu F."/>
            <person name="Chen W."/>
            <person name="Lan L."/>
            <person name="Lai Y."/>
            <person name="Cheng Z."/>
            <person name="Gu M."/>
            <person name="Jiang J."/>
            <person name="Li J."/>
            <person name="Hong G."/>
            <person name="Xue Y."/>
            <person name="Han B."/>
        </authorList>
    </citation>
    <scope>NUCLEOTIDE SEQUENCE [LARGE SCALE GENOMIC DNA]</scope>
    <source>
        <strain>cv. Nipponbare</strain>
    </source>
</reference>
<reference key="3">
    <citation type="journal article" date="2005" name="Nature">
        <title>The map-based sequence of the rice genome.</title>
        <authorList>
            <consortium name="International rice genome sequencing project (IRGSP)"/>
        </authorList>
    </citation>
    <scope>NUCLEOTIDE SEQUENCE [LARGE SCALE GENOMIC DNA]</scope>
    <source>
        <strain>cv. Nipponbare</strain>
    </source>
</reference>
<reference key="4">
    <citation type="journal article" date="2008" name="Nucleic Acids Res.">
        <title>The rice annotation project database (RAP-DB): 2008 update.</title>
        <authorList>
            <consortium name="The rice annotation project (RAP)"/>
        </authorList>
    </citation>
    <scope>GENOME REANNOTATION</scope>
    <source>
        <strain>cv. Nipponbare</strain>
    </source>
</reference>
<reference key="5">
    <citation type="journal article" date="2013" name="Rice">
        <title>Improvement of the Oryza sativa Nipponbare reference genome using next generation sequence and optical map data.</title>
        <authorList>
            <person name="Kawahara Y."/>
            <person name="de la Bastide M."/>
            <person name="Hamilton J.P."/>
            <person name="Kanamori H."/>
            <person name="McCombie W.R."/>
            <person name="Ouyang S."/>
            <person name="Schwartz D.C."/>
            <person name="Tanaka T."/>
            <person name="Wu J."/>
            <person name="Zhou S."/>
            <person name="Childs K.L."/>
            <person name="Davidson R.M."/>
            <person name="Lin H."/>
            <person name="Quesada-Ocampo L."/>
            <person name="Vaillancourt B."/>
            <person name="Sakai H."/>
            <person name="Lee S.S."/>
            <person name="Kim J."/>
            <person name="Numa H."/>
            <person name="Itoh T."/>
            <person name="Buell C.R."/>
            <person name="Matsumoto T."/>
        </authorList>
    </citation>
    <scope>GENOME REANNOTATION</scope>
    <source>
        <strain>cv. Nipponbare</strain>
    </source>
</reference>
<reference key="6">
    <citation type="journal article" date="2003" name="Science">
        <title>Collection, mapping, and annotation of over 28,000 cDNA clones from japonica rice.</title>
        <authorList>
            <consortium name="The rice full-length cDNA consortium"/>
        </authorList>
    </citation>
    <scope>NUCLEOTIDE SEQUENCE [LARGE SCALE MRNA]</scope>
    <source>
        <strain>cv. Nipponbare</strain>
    </source>
</reference>
<reference key="7">
    <citation type="journal article" date="2008" name="Plant Mol. Biol.">
        <title>Inactivation of an aminoaldehyde dehydrogenase is responsible for fragrance in rice.</title>
        <authorList>
            <person name="Bradbury L.M."/>
            <person name="Gillies S.A."/>
            <person name="Brushett D.J."/>
            <person name="Waters D.L."/>
            <person name="Henry R.J."/>
        </authorList>
    </citation>
    <scope>FUNCTION</scope>
    <scope>BIOPHYSICOCHEMICAL PROPERTIES</scope>
    <scope>CATALYTIC ACTIVITY</scope>
</reference>
<reference key="8">
    <citation type="journal article" date="2009" name="FEBS Lett.">
        <title>OsBADH1 is possibly involved in acetaldehyde oxidation in rice plant peroxisomes.</title>
        <authorList>
            <person name="Mitsuya S."/>
            <person name="Yokota Y."/>
            <person name="Fujiwara T."/>
            <person name="Mori N."/>
            <person name="Takabe T."/>
        </authorList>
    </citation>
    <scope>FUNCTION</scope>
    <scope>SUBCELLULAR LOCATION</scope>
    <scope>INDUCTION BY SUBMERGENCE</scope>
    <scope>BIOPHYSICOCHEMICAL PROPERTIES</scope>
    <source>
        <strain>cv. Nipponbare</strain>
    </source>
</reference>
<reference key="9">
    <citation type="journal article" date="2012" name="Biochimie">
        <title>Dissecting substrate specificity of two rice BADH isoforms: Enzyme kinetics, docking and molecular dynamics simulation studies.</title>
        <authorList>
            <person name="Jiamsomboon K."/>
            <person name="Treesuwan W."/>
            <person name="Boonyalai N."/>
        </authorList>
    </citation>
    <scope>FUNCTION</scope>
    <scope>MUTAGENESIS OF ASN-164 AND TRP-172</scope>
    <scope>BINDING OF BETAINE ALDEHYDE AND GAMMA-4-AMINOBUTYRALDEHYDE</scope>
    <scope>INTERACTION WITH NAD</scope>
    <scope>BIOPHYSICOCHEMICAL PROPERTIES</scope>
</reference>
<comment type="function">
    <text evidence="3 4 5">Dehydrogenase that can use N-acetyl-gamma-aminobutyraldehyde (NAGABald), gamma-guanidinobutyraldehyde (GGBald), betaine aldehyde (Bet-ald), gamma-aminobutyraldehyde (GAB-ald), acetaldehyde, 4-aminobutylaldehyde (AB-ald), 3-aminopropionaldehyde (AP-ald), 4-N-trimethylaminobutyraldehyde (TMAB-ald) and 3-N-trimethylaminopropionaldehyde (TMAP-ald) as substrates. Catalyzes the oxidation of GAB-ald more efficiently than Bet-ald. May convert acetaldehyde into acetate, thus facilitating the production of acetyl-CoA in peroxisomes under anaerobic conditions.</text>
</comment>
<comment type="catalytic activity">
    <reaction evidence="3">
        <text>betaine aldehyde + NAD(+) + H2O = glycine betaine + NADH + 2 H(+)</text>
        <dbReference type="Rhea" id="RHEA:15305"/>
        <dbReference type="ChEBI" id="CHEBI:15377"/>
        <dbReference type="ChEBI" id="CHEBI:15378"/>
        <dbReference type="ChEBI" id="CHEBI:15710"/>
        <dbReference type="ChEBI" id="CHEBI:17750"/>
        <dbReference type="ChEBI" id="CHEBI:57540"/>
        <dbReference type="ChEBI" id="CHEBI:57945"/>
        <dbReference type="EC" id="1.2.1.8"/>
    </reaction>
</comment>
<comment type="biophysicochemical properties">
    <kinetics>
        <KM evidence="3">420 uM for N-acetyl-gamma-aminobutyraldehyde (NAGABald)</KM>
        <KM evidence="3">545 uM for gamma-guanidinobutyraldehyde (GGBald)</KM>
        <KM evidence="3">3 mM for betaine aldehyde</KM>
        <KM evidence="3">497 uM for gamma-aminobutyraldehyde</KM>
        <KM evidence="5">1.29 mM for betaine aldehyde (at 30 degrees Celsius)</KM>
        <KM evidence="5">432 uM for gamma-aminobutyraldehyde (at 30 degrees Celsius)</KM>
        <KM evidence="5">99 uM for acetaldehyde (at 30 degrees Celsius)</KM>
        <KM evidence="4">2.6 mM for betaine aldehyde</KM>
        <KM evidence="4">4.5 uM for 4-aminobutyraldehyde (AB-ald)</KM>
        <KM evidence="4">17 uM for 3-aminopropionaldehyde (AP-ald)</KM>
        <KM evidence="4">7.8 uM for 4-N-trimethylaminobutyraldehyde (TMAB-ald)</KM>
        <KM evidence="4">35 uM for 3-N-trimethylaminopropionaldehyde (TMAP-ald)</KM>
        <KM evidence="4">130 uM for acetaldehyde</KM>
        <Vmax evidence="4">0.71 umol/min/mg enzyme with acetaldehyde as substrate</Vmax>
    </kinetics>
    <phDependence>
        <text evidence="3 4 5">Optimum pH is 9.5.</text>
    </phDependence>
</comment>
<comment type="pathway">
    <text>Amine and polyamine biosynthesis; betaine biosynthesis via choline pathway; betaine from betaine aldehyde: step 1/1.</text>
</comment>
<comment type="subunit">
    <text evidence="1">Homodimer.</text>
</comment>
<comment type="subcellular location">
    <subcellularLocation>
        <location evidence="4">Peroxisome</location>
    </subcellularLocation>
</comment>
<comment type="induction">
    <text evidence="4">Following submergence treatment, transient decreased levels that recovers after re-aeration.</text>
</comment>
<comment type="similarity">
    <text evidence="6">Belongs to the aldehyde dehydrogenase family.</text>
</comment>
<accession>O24174</accession>
<accession>Q0JCK7</accession>
<accession>Q7F9Q3</accession>
<gene>
    <name type="primary">BADH1</name>
    <name type="ordered locus">Os04g0464200</name>
    <name type="ordered locus">LOC_Os04g39020</name>
    <name type="ORF">OSJNBa0060P14.8</name>
</gene>
<proteinExistence type="evidence at protein level"/>
<feature type="chain" id="PRO_0000056530" description="Betaine aldehyde dehydrogenase 1">
    <location>
        <begin position="1"/>
        <end position="505"/>
    </location>
</feature>
<feature type="short sequence motif" description="Microbody targeting signal" evidence="2">
    <location>
        <begin position="503"/>
        <end position="505"/>
    </location>
</feature>
<feature type="active site" evidence="1">
    <location>
        <position position="262"/>
    </location>
</feature>
<feature type="active site" evidence="1">
    <location>
        <position position="296"/>
    </location>
</feature>
<feature type="binding site" evidence="6">
    <location>
        <begin position="163"/>
        <end position="172"/>
    </location>
    <ligand>
        <name>betaine aldehyde</name>
        <dbReference type="ChEBI" id="CHEBI:15710"/>
    </ligand>
</feature>
<feature type="binding site" evidence="1">
    <location>
        <begin position="240"/>
        <end position="245"/>
    </location>
    <ligand>
        <name>NAD(+)</name>
        <dbReference type="ChEBI" id="CHEBI:57540"/>
    </ligand>
</feature>
<feature type="binding site" evidence="6">
    <location>
        <begin position="262"/>
        <end position="263"/>
    </location>
    <ligand>
        <name>4-aminobutanal</name>
        <dbReference type="ChEBI" id="CHEBI:58264"/>
    </ligand>
</feature>
<feature type="binding site" evidence="6">
    <location>
        <position position="262"/>
    </location>
    <ligand>
        <name>betaine aldehyde</name>
        <dbReference type="ChEBI" id="CHEBI:15710"/>
    </ligand>
</feature>
<feature type="binding site" evidence="6">
    <location>
        <begin position="294"/>
        <end position="297"/>
    </location>
    <ligand>
        <name>betaine aldehyde</name>
        <dbReference type="ChEBI" id="CHEBI:15710"/>
    </ligand>
</feature>
<feature type="binding site" evidence="6">
    <location>
        <position position="296"/>
    </location>
    <ligand>
        <name>4-aminobutanal</name>
        <dbReference type="ChEBI" id="CHEBI:58264"/>
    </ligand>
</feature>
<feature type="binding site" evidence="6">
    <location>
        <position position="455"/>
    </location>
    <ligand>
        <name>betaine aldehyde</name>
        <dbReference type="ChEBI" id="CHEBI:15710"/>
    </ligand>
</feature>
<feature type="binding site" evidence="6">
    <location>
        <position position="461"/>
    </location>
    <ligand>
        <name>4-aminobutanal</name>
        <dbReference type="ChEBI" id="CHEBI:58264"/>
    </ligand>
</feature>
<feature type="mutagenesis site" description="Slightly reduced affinity for NAD, 6-fold enhanced affinity for both gamma-4-aminobutyraldehyde (GAB-ald) and betaine aldehyde (Bet-ald), but 2-fold decrease in catalytic efficiency." evidence="5">
    <original>N</original>
    <variation>A</variation>
    <location>
        <position position="164"/>
    </location>
</feature>
<feature type="mutagenesis site" description="Slightly reduced affinity for NAD, enhanced affinity for both betaine aldehyde (Bet-ald) (10-fold) and gamma-4-aminobutyraldehyde (GAB-ald) (2-fold)." evidence="5">
    <original>W</original>
    <variation>A</variation>
    <location>
        <position position="172"/>
    </location>
</feature>
<feature type="mutagenesis site" description="Slightly reduced affinity for NAD, but 6-fold enhanced affinity for both gamma-4-aminobutyraldehyde (GAB-ald) and betaine aldehyde (Bet-ald) and 2-fold increase in catalytic efficiency towards GAB-ald." evidence="5">
    <original>W</original>
    <variation>F</variation>
    <location>
        <position position="172"/>
    </location>
</feature>
<organism>
    <name type="scientific">Oryza sativa subsp. japonica</name>
    <name type="common">Rice</name>
    <dbReference type="NCBI Taxonomy" id="39947"/>
    <lineage>
        <taxon>Eukaryota</taxon>
        <taxon>Viridiplantae</taxon>
        <taxon>Streptophyta</taxon>
        <taxon>Embryophyta</taxon>
        <taxon>Tracheophyta</taxon>
        <taxon>Spermatophyta</taxon>
        <taxon>Magnoliopsida</taxon>
        <taxon>Liliopsida</taxon>
        <taxon>Poales</taxon>
        <taxon>Poaceae</taxon>
        <taxon>BOP clade</taxon>
        <taxon>Oryzoideae</taxon>
        <taxon>Oryzeae</taxon>
        <taxon>Oryzinae</taxon>
        <taxon>Oryza</taxon>
        <taxon>Oryza sativa</taxon>
    </lineage>
</organism>
<keyword id="KW-0520">NAD</keyword>
<keyword id="KW-0560">Oxidoreductase</keyword>
<keyword id="KW-0576">Peroxisome</keyword>
<keyword id="KW-1185">Reference proteome</keyword>
<evidence type="ECO:0000250" key="1"/>
<evidence type="ECO:0000255" key="2"/>
<evidence type="ECO:0000269" key="3">
    <source>
    </source>
</evidence>
<evidence type="ECO:0000269" key="4">
    <source>
    </source>
</evidence>
<evidence type="ECO:0000269" key="5">
    <source>
    </source>
</evidence>
<evidence type="ECO:0000305" key="6"/>
<dbReference type="EC" id="1.2.1.8"/>
<dbReference type="EMBL" id="AB001348">
    <property type="protein sequence ID" value="BAA21098.1"/>
    <property type="molecule type" value="Genomic_DNA"/>
</dbReference>
<dbReference type="EMBL" id="AL663017">
    <property type="protein sequence ID" value="CAD41035.1"/>
    <property type="molecule type" value="Genomic_DNA"/>
</dbReference>
<dbReference type="EMBL" id="AP008210">
    <property type="protein sequence ID" value="BAF14930.1"/>
    <property type="molecule type" value="Genomic_DNA"/>
</dbReference>
<dbReference type="EMBL" id="AP014960">
    <property type="protein sequence ID" value="BAS89584.1"/>
    <property type="molecule type" value="Genomic_DNA"/>
</dbReference>
<dbReference type="EMBL" id="AK103582">
    <property type="protein sequence ID" value="BAG96152.1"/>
    <property type="molecule type" value="mRNA"/>
</dbReference>
<dbReference type="PIR" id="T03394">
    <property type="entry name" value="T03394"/>
</dbReference>
<dbReference type="RefSeq" id="XP_015637091.1">
    <property type="nucleotide sequence ID" value="XM_015781605.1"/>
</dbReference>
<dbReference type="SMR" id="O24174"/>
<dbReference type="FunCoup" id="O24174">
    <property type="interactions" value="15"/>
</dbReference>
<dbReference type="STRING" id="39947.O24174"/>
<dbReference type="PaxDb" id="39947-O24174"/>
<dbReference type="EnsemblPlants" id="Os04t0464200-01">
    <property type="protein sequence ID" value="Os04t0464200-01"/>
    <property type="gene ID" value="Os04g0464200"/>
</dbReference>
<dbReference type="Gramene" id="Os04t0464200-01">
    <property type="protein sequence ID" value="Os04t0464200-01"/>
    <property type="gene ID" value="Os04g0464200"/>
</dbReference>
<dbReference type="KEGG" id="dosa:Os04g0464200"/>
<dbReference type="eggNOG" id="KOG2450">
    <property type="taxonomic scope" value="Eukaryota"/>
</dbReference>
<dbReference type="HOGENOM" id="CLU_005391_0_1_1"/>
<dbReference type="InParanoid" id="O24174"/>
<dbReference type="OMA" id="KHVMFDN"/>
<dbReference type="OrthoDB" id="310895at2759"/>
<dbReference type="BRENDA" id="1.2.1.8">
    <property type="organism ID" value="4460"/>
</dbReference>
<dbReference type="PlantReactome" id="R-OSA-1119579">
    <property type="pathway name" value="Glycine betaine biosynthesis III"/>
</dbReference>
<dbReference type="UniPathway" id="UPA00529">
    <property type="reaction ID" value="UER00386"/>
</dbReference>
<dbReference type="Proteomes" id="UP000000763">
    <property type="component" value="Chromosome 4"/>
</dbReference>
<dbReference type="Proteomes" id="UP000059680">
    <property type="component" value="Chromosome 4"/>
</dbReference>
<dbReference type="GO" id="GO:0005777">
    <property type="term" value="C:peroxisome"/>
    <property type="evidence" value="ECO:0000314"/>
    <property type="project" value="UniProtKB"/>
</dbReference>
<dbReference type="GO" id="GO:0008802">
    <property type="term" value="F:betaine-aldehyde dehydrogenase (NAD+) activity"/>
    <property type="evidence" value="ECO:0000314"/>
    <property type="project" value="UniProtKB"/>
</dbReference>
<dbReference type="GO" id="GO:0071454">
    <property type="term" value="P:cellular response to anoxia"/>
    <property type="evidence" value="ECO:0000314"/>
    <property type="project" value="UniProtKB"/>
</dbReference>
<dbReference type="GO" id="GO:0019285">
    <property type="term" value="P:glycine betaine biosynthetic process from choline"/>
    <property type="evidence" value="ECO:0007669"/>
    <property type="project" value="UniProtKB-UniPathway"/>
</dbReference>
<dbReference type="CDD" id="cd07110">
    <property type="entry name" value="ALDH_F10_BADH"/>
    <property type="match status" value="1"/>
</dbReference>
<dbReference type="FunFam" id="3.40.309.10:FF:000012">
    <property type="entry name" value="Betaine aldehyde dehydrogenase"/>
    <property type="match status" value="1"/>
</dbReference>
<dbReference type="FunFam" id="3.40.605.10:FF:000007">
    <property type="entry name" value="NAD/NADP-dependent betaine aldehyde dehydrogenase"/>
    <property type="match status" value="1"/>
</dbReference>
<dbReference type="Gene3D" id="3.40.605.10">
    <property type="entry name" value="Aldehyde Dehydrogenase, Chain A, domain 1"/>
    <property type="match status" value="1"/>
</dbReference>
<dbReference type="Gene3D" id="3.40.309.10">
    <property type="entry name" value="Aldehyde Dehydrogenase, Chain A, domain 2"/>
    <property type="match status" value="1"/>
</dbReference>
<dbReference type="InterPro" id="IPR016161">
    <property type="entry name" value="Ald_DH/histidinol_DH"/>
</dbReference>
<dbReference type="InterPro" id="IPR016163">
    <property type="entry name" value="Ald_DH_C"/>
</dbReference>
<dbReference type="InterPro" id="IPR016160">
    <property type="entry name" value="Ald_DH_CS_CYS"/>
</dbReference>
<dbReference type="InterPro" id="IPR029510">
    <property type="entry name" value="Ald_DH_CS_GLU"/>
</dbReference>
<dbReference type="InterPro" id="IPR016162">
    <property type="entry name" value="Ald_DH_N"/>
</dbReference>
<dbReference type="InterPro" id="IPR015590">
    <property type="entry name" value="Aldehyde_DH_dom"/>
</dbReference>
<dbReference type="PANTHER" id="PTHR43860">
    <property type="entry name" value="BETAINE ALDEHYDE DEHYDROGENASE"/>
    <property type="match status" value="1"/>
</dbReference>
<dbReference type="PANTHER" id="PTHR43860:SF7">
    <property type="entry name" value="BETAINE ALDEHYDE DEHYDROGENASE 1"/>
    <property type="match status" value="1"/>
</dbReference>
<dbReference type="Pfam" id="PF00171">
    <property type="entry name" value="Aldedh"/>
    <property type="match status" value="1"/>
</dbReference>
<dbReference type="SUPFAM" id="SSF53720">
    <property type="entry name" value="ALDH-like"/>
    <property type="match status" value="1"/>
</dbReference>
<dbReference type="PROSITE" id="PS00070">
    <property type="entry name" value="ALDEHYDE_DEHYDR_CYS"/>
    <property type="match status" value="1"/>
</dbReference>
<dbReference type="PROSITE" id="PS00687">
    <property type="entry name" value="ALDEHYDE_DEHYDR_GLU"/>
    <property type="match status" value="1"/>
</dbReference>
<protein>
    <recommendedName>
        <fullName>Betaine aldehyde dehydrogenase 1</fullName>
        <shortName>OsBADH1</shortName>
        <ecNumber>1.2.1.8</ecNumber>
    </recommendedName>
</protein>